<protein>
    <recommendedName>
        <fullName evidence="3">Large ribosomal subunit protein uL22A</fullName>
    </recommendedName>
    <alternativeName>
        <fullName>60S ribosomal protein L17-A</fullName>
    </alternativeName>
</protein>
<reference key="1">
    <citation type="journal article" date="2002" name="Nature">
        <title>The genome sequence of Schizosaccharomyces pombe.</title>
        <authorList>
            <person name="Wood V."/>
            <person name="Gwilliam R."/>
            <person name="Rajandream M.A."/>
            <person name="Lyne M.H."/>
            <person name="Lyne R."/>
            <person name="Stewart A."/>
            <person name="Sgouros J.G."/>
            <person name="Peat N."/>
            <person name="Hayles J."/>
            <person name="Baker S.G."/>
            <person name="Basham D."/>
            <person name="Bowman S."/>
            <person name="Brooks K."/>
            <person name="Brown D."/>
            <person name="Brown S."/>
            <person name="Chillingworth T."/>
            <person name="Churcher C.M."/>
            <person name="Collins M."/>
            <person name="Connor R."/>
            <person name="Cronin A."/>
            <person name="Davis P."/>
            <person name="Feltwell T."/>
            <person name="Fraser A."/>
            <person name="Gentles S."/>
            <person name="Goble A."/>
            <person name="Hamlin N."/>
            <person name="Harris D.E."/>
            <person name="Hidalgo J."/>
            <person name="Hodgson G."/>
            <person name="Holroyd S."/>
            <person name="Hornsby T."/>
            <person name="Howarth S."/>
            <person name="Huckle E.J."/>
            <person name="Hunt S."/>
            <person name="Jagels K."/>
            <person name="James K.D."/>
            <person name="Jones L."/>
            <person name="Jones M."/>
            <person name="Leather S."/>
            <person name="McDonald S."/>
            <person name="McLean J."/>
            <person name="Mooney P."/>
            <person name="Moule S."/>
            <person name="Mungall K.L."/>
            <person name="Murphy L.D."/>
            <person name="Niblett D."/>
            <person name="Odell C."/>
            <person name="Oliver K."/>
            <person name="O'Neil S."/>
            <person name="Pearson D."/>
            <person name="Quail M.A."/>
            <person name="Rabbinowitsch E."/>
            <person name="Rutherford K.M."/>
            <person name="Rutter S."/>
            <person name="Saunders D."/>
            <person name="Seeger K."/>
            <person name="Sharp S."/>
            <person name="Skelton J."/>
            <person name="Simmonds M.N."/>
            <person name="Squares R."/>
            <person name="Squares S."/>
            <person name="Stevens K."/>
            <person name="Taylor K."/>
            <person name="Taylor R.G."/>
            <person name="Tivey A."/>
            <person name="Walsh S.V."/>
            <person name="Warren T."/>
            <person name="Whitehead S."/>
            <person name="Woodward J.R."/>
            <person name="Volckaert G."/>
            <person name="Aert R."/>
            <person name="Robben J."/>
            <person name="Grymonprez B."/>
            <person name="Weltjens I."/>
            <person name="Vanstreels E."/>
            <person name="Rieger M."/>
            <person name="Schaefer M."/>
            <person name="Mueller-Auer S."/>
            <person name="Gabel C."/>
            <person name="Fuchs M."/>
            <person name="Duesterhoeft A."/>
            <person name="Fritzc C."/>
            <person name="Holzer E."/>
            <person name="Moestl D."/>
            <person name="Hilbert H."/>
            <person name="Borzym K."/>
            <person name="Langer I."/>
            <person name="Beck A."/>
            <person name="Lehrach H."/>
            <person name="Reinhardt R."/>
            <person name="Pohl T.M."/>
            <person name="Eger P."/>
            <person name="Zimmermann W."/>
            <person name="Wedler H."/>
            <person name="Wambutt R."/>
            <person name="Purnelle B."/>
            <person name="Goffeau A."/>
            <person name="Cadieu E."/>
            <person name="Dreano S."/>
            <person name="Gloux S."/>
            <person name="Lelaure V."/>
            <person name="Mottier S."/>
            <person name="Galibert F."/>
            <person name="Aves S.J."/>
            <person name="Xiang Z."/>
            <person name="Hunt C."/>
            <person name="Moore K."/>
            <person name="Hurst S.M."/>
            <person name="Lucas M."/>
            <person name="Rochet M."/>
            <person name="Gaillardin C."/>
            <person name="Tallada V.A."/>
            <person name="Garzon A."/>
            <person name="Thode G."/>
            <person name="Daga R.R."/>
            <person name="Cruzado L."/>
            <person name="Jimenez J."/>
            <person name="Sanchez M."/>
            <person name="del Rey F."/>
            <person name="Benito J."/>
            <person name="Dominguez A."/>
            <person name="Revuelta J.L."/>
            <person name="Moreno S."/>
            <person name="Armstrong J."/>
            <person name="Forsburg S.L."/>
            <person name="Cerutti L."/>
            <person name="Lowe T."/>
            <person name="McCombie W.R."/>
            <person name="Paulsen I."/>
            <person name="Potashkin J."/>
            <person name="Shpakovski G.V."/>
            <person name="Ussery D."/>
            <person name="Barrell B.G."/>
            <person name="Nurse P."/>
        </authorList>
    </citation>
    <scope>NUCLEOTIDE SEQUENCE [LARGE SCALE GENOMIC DNA]</scope>
    <source>
        <strain>972 / ATCC 24843</strain>
    </source>
</reference>
<reference key="2">
    <citation type="journal article" date="2006" name="Nat. Biotechnol.">
        <title>ORFeome cloning and global analysis of protein localization in the fission yeast Schizosaccharomyces pombe.</title>
        <authorList>
            <person name="Matsuyama A."/>
            <person name="Arai R."/>
            <person name="Yashiroda Y."/>
            <person name="Shirai A."/>
            <person name="Kamata A."/>
            <person name="Sekido S."/>
            <person name="Kobayashi Y."/>
            <person name="Hashimoto A."/>
            <person name="Hamamoto M."/>
            <person name="Hiraoka Y."/>
            <person name="Horinouchi S."/>
            <person name="Yoshida M."/>
        </authorList>
    </citation>
    <scope>SUBCELLULAR LOCATION [LARGE SCALE ANALYSIS]</scope>
</reference>
<proteinExistence type="evidence at protein level"/>
<feature type="chain" id="PRO_0000125344" description="Large ribosomal subunit protein uL22A">
    <location>
        <begin position="1"/>
        <end position="187"/>
    </location>
</feature>
<feature type="strand" evidence="5">
    <location>
        <begin position="5"/>
        <end position="7"/>
    </location>
</feature>
<feature type="helix" evidence="5">
    <location>
        <begin position="11"/>
        <end position="13"/>
    </location>
</feature>
<feature type="strand" evidence="5">
    <location>
        <begin position="14"/>
        <end position="24"/>
    </location>
</feature>
<feature type="helix" evidence="5">
    <location>
        <begin position="26"/>
        <end position="36"/>
    </location>
</feature>
<feature type="helix" evidence="5">
    <location>
        <begin position="41"/>
        <end position="52"/>
    </location>
</feature>
<feature type="helix" evidence="5">
    <location>
        <begin position="71"/>
        <end position="76"/>
    </location>
</feature>
<feature type="strand" evidence="6">
    <location>
        <begin position="79"/>
        <end position="82"/>
    </location>
</feature>
<feature type="helix" evidence="5">
    <location>
        <begin position="86"/>
        <end position="105"/>
    </location>
</feature>
<feature type="strand" evidence="5">
    <location>
        <begin position="111"/>
        <end position="121"/>
    </location>
</feature>
<feature type="strand" evidence="5">
    <location>
        <begin position="144"/>
        <end position="152"/>
    </location>
</feature>
<feature type="helix" evidence="4">
    <location>
        <begin position="169"/>
        <end position="181"/>
    </location>
</feature>
<evidence type="ECO:0000250" key="1">
    <source>
        <dbReference type="UniProtKB" id="P05740"/>
    </source>
</evidence>
<evidence type="ECO:0000269" key="2">
    <source>
    </source>
</evidence>
<evidence type="ECO:0000305" key="3"/>
<evidence type="ECO:0007829" key="4">
    <source>
        <dbReference type="PDB" id="8ETC"/>
    </source>
</evidence>
<evidence type="ECO:0007829" key="5">
    <source>
        <dbReference type="PDB" id="8EUY"/>
    </source>
</evidence>
<evidence type="ECO:0007829" key="6">
    <source>
        <dbReference type="PDB" id="8EV3"/>
    </source>
</evidence>
<name>RL17A_SCHPO</name>
<comment type="function">
    <text evidence="1">Component of the ribosome, a large ribonucleoprotein complex responsible for the synthesis of proteins in the cell. The small ribosomal subunit (SSU) binds messenger RNAs (mRNAs) and translates the encoded message by selecting cognate aminoacyl-transfer RNA (tRNA) molecules. The large subunit (LSU) contains the ribosomal catalytic site termed the peptidyl transferase center (PTC), which catalyzes the formation of peptide bonds, thereby polymerizing the amino acids delivered by tRNAs into a polypeptide chain. The nascent polypeptides leave the ribosome through a tunnel in the LSU and interact with protein factors that function in enzymatic processing, targeting, and the membrane insertion of nascent chains at the exit of the ribosomal tunnel.</text>
</comment>
<comment type="subunit">
    <text evidence="1">Component of the large ribosomal subunit (LSU). Mature yeast ribosomes consist of a small (40S) and a large (60S) subunit. The 40S small subunit contains 1 molecule of ribosomal RNA (18S rRNA) and at least 33 different proteins. The large 60S subunit contains 3 rRNA molecules (25S, 5.8S and 5S rRNA) and at least 46 different proteins. uL22 is associated with the polypeptide exit tunnel.</text>
</comment>
<comment type="subcellular location">
    <subcellularLocation>
        <location evidence="2">Cytoplasm</location>
    </subcellularLocation>
</comment>
<comment type="miscellaneous">
    <text>There are 2 genes for uL22 in S.pombe.</text>
</comment>
<comment type="similarity">
    <text evidence="3">Belongs to the universal ribosomal protein uL22 family.</text>
</comment>
<gene>
    <name type="primary">rpl1701</name>
    <name type="synonym">rpl17</name>
    <name type="synonym">rpl17a</name>
    <name type="ORF">SPBC2F12.04</name>
</gene>
<keyword id="KW-0002">3D-structure</keyword>
<keyword id="KW-0963">Cytoplasm</keyword>
<keyword id="KW-1185">Reference proteome</keyword>
<keyword id="KW-0687">Ribonucleoprotein</keyword>
<keyword id="KW-0689">Ribosomal protein</keyword>
<dbReference type="EMBL" id="CU329671">
    <property type="protein sequence ID" value="CAB10153.1"/>
    <property type="molecule type" value="Genomic_DNA"/>
</dbReference>
<dbReference type="PIR" id="T40136">
    <property type="entry name" value="T40136"/>
</dbReference>
<dbReference type="RefSeq" id="NP_595711.1">
    <property type="nucleotide sequence ID" value="NM_001021608.2"/>
</dbReference>
<dbReference type="PDB" id="8ESQ">
    <property type="method" value="EM"/>
    <property type="resolution" value="2.80 A"/>
    <property type="chains" value="P=1-187"/>
</dbReference>
<dbReference type="PDB" id="8ESR">
    <property type="method" value="EM"/>
    <property type="resolution" value="3.20 A"/>
    <property type="chains" value="P=1-187"/>
</dbReference>
<dbReference type="PDB" id="8ETC">
    <property type="method" value="EM"/>
    <property type="resolution" value="3.10 A"/>
    <property type="chains" value="P=1-187"/>
</dbReference>
<dbReference type="PDB" id="8ETG">
    <property type="method" value="EM"/>
    <property type="resolution" value="3.40 A"/>
    <property type="chains" value="P=1-187"/>
</dbReference>
<dbReference type="PDB" id="8ETH">
    <property type="method" value="EM"/>
    <property type="resolution" value="3.80 A"/>
    <property type="chains" value="P=1-187"/>
</dbReference>
<dbReference type="PDB" id="8ETI">
    <property type="method" value="EM"/>
    <property type="resolution" value="3.70 A"/>
    <property type="chains" value="P=1-187"/>
</dbReference>
<dbReference type="PDB" id="8ETJ">
    <property type="method" value="EM"/>
    <property type="resolution" value="3.20 A"/>
    <property type="chains" value="P=1-187"/>
</dbReference>
<dbReference type="PDB" id="8EUG">
    <property type="method" value="EM"/>
    <property type="resolution" value="2.80 A"/>
    <property type="chains" value="P=1-187"/>
</dbReference>
<dbReference type="PDB" id="8EUI">
    <property type="method" value="EM"/>
    <property type="resolution" value="3.10 A"/>
    <property type="chains" value="P=1-187"/>
</dbReference>
<dbReference type="PDB" id="8EUP">
    <property type="method" value="EM"/>
    <property type="resolution" value="3.10 A"/>
    <property type="chains" value="P=1-187"/>
</dbReference>
<dbReference type="PDB" id="8EUY">
    <property type="method" value="EM"/>
    <property type="resolution" value="3.00 A"/>
    <property type="chains" value="P=1-187"/>
</dbReference>
<dbReference type="PDB" id="8EV3">
    <property type="method" value="EM"/>
    <property type="resolution" value="3.00 A"/>
    <property type="chains" value="P=1-187"/>
</dbReference>
<dbReference type="PDB" id="9AXT">
    <property type="method" value="EM"/>
    <property type="resolution" value="2.40 A"/>
    <property type="chains" value="Bb=1-187"/>
</dbReference>
<dbReference type="PDB" id="9AXU">
    <property type="method" value="EM"/>
    <property type="resolution" value="1.94 A"/>
    <property type="chains" value="b=1-187"/>
</dbReference>
<dbReference type="PDB" id="9AXV">
    <property type="method" value="EM"/>
    <property type="resolution" value="2.40 A"/>
    <property type="chains" value="Bb=1-187"/>
</dbReference>
<dbReference type="PDBsum" id="8ESQ"/>
<dbReference type="PDBsum" id="8ESR"/>
<dbReference type="PDBsum" id="8ETC"/>
<dbReference type="PDBsum" id="8ETG"/>
<dbReference type="PDBsum" id="8ETH"/>
<dbReference type="PDBsum" id="8ETI"/>
<dbReference type="PDBsum" id="8ETJ"/>
<dbReference type="PDBsum" id="8EUG"/>
<dbReference type="PDBsum" id="8EUI"/>
<dbReference type="PDBsum" id="8EUP"/>
<dbReference type="PDBsum" id="8EUY"/>
<dbReference type="PDBsum" id="8EV3"/>
<dbReference type="PDBsum" id="9AXT"/>
<dbReference type="PDBsum" id="9AXU"/>
<dbReference type="PDBsum" id="9AXV"/>
<dbReference type="EMDB" id="EMD-43972"/>
<dbReference type="EMDB" id="EMD-43973"/>
<dbReference type="EMDB" id="EMD-43976"/>
<dbReference type="SMR" id="O14339"/>
<dbReference type="BioGRID" id="276887">
    <property type="interactions" value="7"/>
</dbReference>
<dbReference type="FunCoup" id="O14339">
    <property type="interactions" value="464"/>
</dbReference>
<dbReference type="IntAct" id="O14339">
    <property type="interactions" value="1"/>
</dbReference>
<dbReference type="STRING" id="284812.O14339"/>
<dbReference type="iPTMnet" id="O14339"/>
<dbReference type="PaxDb" id="4896-SPBC2F12.04.1"/>
<dbReference type="EnsemblFungi" id="SPBC2F12.04.1">
    <property type="protein sequence ID" value="SPBC2F12.04.1:pep"/>
    <property type="gene ID" value="SPBC2F12.04"/>
</dbReference>
<dbReference type="GeneID" id="2540358"/>
<dbReference type="KEGG" id="spo:2540358"/>
<dbReference type="PomBase" id="SPBC2F12.04">
    <property type="gene designation" value="rpl1701"/>
</dbReference>
<dbReference type="VEuPathDB" id="FungiDB:SPBC2F12.04"/>
<dbReference type="eggNOG" id="KOG3353">
    <property type="taxonomic scope" value="Eukaryota"/>
</dbReference>
<dbReference type="HOGENOM" id="CLU_083987_0_1_1"/>
<dbReference type="InParanoid" id="O14339"/>
<dbReference type="OMA" id="NTYETAR"/>
<dbReference type="PhylomeDB" id="O14339"/>
<dbReference type="Reactome" id="R-SPO-156827">
    <property type="pathway name" value="L13a-mediated translational silencing of Ceruloplasmin expression"/>
</dbReference>
<dbReference type="Reactome" id="R-SPO-1799339">
    <property type="pathway name" value="SRP-dependent cotranslational protein targeting to membrane"/>
</dbReference>
<dbReference type="Reactome" id="R-SPO-72689">
    <property type="pathway name" value="Formation of a pool of free 40S subunits"/>
</dbReference>
<dbReference type="Reactome" id="R-SPO-72706">
    <property type="pathway name" value="GTP hydrolysis and joining of the 60S ribosomal subunit"/>
</dbReference>
<dbReference type="Reactome" id="R-SPO-975956">
    <property type="pathway name" value="Nonsense Mediated Decay (NMD) independent of the Exon Junction Complex (EJC)"/>
</dbReference>
<dbReference type="Reactome" id="R-SPO-975957">
    <property type="pathway name" value="Nonsense Mediated Decay (NMD) enhanced by the Exon Junction Complex (EJC)"/>
</dbReference>
<dbReference type="PRO" id="PR:O14339"/>
<dbReference type="Proteomes" id="UP000002485">
    <property type="component" value="Chromosome II"/>
</dbReference>
<dbReference type="GO" id="GO:0005829">
    <property type="term" value="C:cytosol"/>
    <property type="evidence" value="ECO:0007005"/>
    <property type="project" value="PomBase"/>
</dbReference>
<dbReference type="GO" id="GO:0022625">
    <property type="term" value="C:cytosolic large ribosomal subunit"/>
    <property type="evidence" value="ECO:0000269"/>
    <property type="project" value="PomBase"/>
</dbReference>
<dbReference type="GO" id="GO:0030684">
    <property type="term" value="C:preribosome"/>
    <property type="evidence" value="ECO:0000314"/>
    <property type="project" value="PomBase"/>
</dbReference>
<dbReference type="GO" id="GO:0003735">
    <property type="term" value="F:structural constituent of ribosome"/>
    <property type="evidence" value="ECO:0000318"/>
    <property type="project" value="GO_Central"/>
</dbReference>
<dbReference type="GO" id="GO:0002181">
    <property type="term" value="P:cytoplasmic translation"/>
    <property type="evidence" value="ECO:0000318"/>
    <property type="project" value="GO_Central"/>
</dbReference>
<dbReference type="CDD" id="cd00336">
    <property type="entry name" value="Ribosomal_L22"/>
    <property type="match status" value="1"/>
</dbReference>
<dbReference type="FunFam" id="3.90.470.10:FF:000012">
    <property type="entry name" value="60S ribosomal protein L17"/>
    <property type="match status" value="1"/>
</dbReference>
<dbReference type="Gene3D" id="3.90.470.10">
    <property type="entry name" value="Ribosomal protein L22/L17"/>
    <property type="match status" value="1"/>
</dbReference>
<dbReference type="InterPro" id="IPR001063">
    <property type="entry name" value="Ribosomal_uL22"/>
</dbReference>
<dbReference type="InterPro" id="IPR018260">
    <property type="entry name" value="Ribosomal_uL22_CS"/>
</dbReference>
<dbReference type="InterPro" id="IPR005721">
    <property type="entry name" value="Ribosomal_uL22_euk/arc"/>
</dbReference>
<dbReference type="InterPro" id="IPR036394">
    <property type="entry name" value="Ribosomal_uL22_sf"/>
</dbReference>
<dbReference type="NCBIfam" id="TIGR01038">
    <property type="entry name" value="uL22_arch_euk"/>
    <property type="match status" value="1"/>
</dbReference>
<dbReference type="PANTHER" id="PTHR11593">
    <property type="entry name" value="60S RIBOSOMAL PROTEIN L17"/>
    <property type="match status" value="1"/>
</dbReference>
<dbReference type="PANTHER" id="PTHR11593:SF10">
    <property type="entry name" value="60S RIBOSOMAL PROTEIN L17"/>
    <property type="match status" value="1"/>
</dbReference>
<dbReference type="Pfam" id="PF00237">
    <property type="entry name" value="Ribosomal_L22"/>
    <property type="match status" value="1"/>
</dbReference>
<dbReference type="SUPFAM" id="SSF54843">
    <property type="entry name" value="Ribosomal protein L22"/>
    <property type="match status" value="1"/>
</dbReference>
<dbReference type="PROSITE" id="PS00464">
    <property type="entry name" value="RIBOSOMAL_L22"/>
    <property type="match status" value="1"/>
</dbReference>
<sequence>MVRYSASPALETKCAKARGAYLRTHFKNSREVAFTINGMSLKKAFIFLDNVKEHKQAVPFRRFNGGVGRTAQGKEFGVTQARWPVKSVKFFYDLLKNAEANAEAKGLDMDKLIIKHVQVNAAPKQRRRTYRAHGRVTAYLSSPSHIEIIVAEEEEAVPKANDTVSRVSLKQGAKARNLAARKAITAA</sequence>
<organism>
    <name type="scientific">Schizosaccharomyces pombe (strain 972 / ATCC 24843)</name>
    <name type="common">Fission yeast</name>
    <dbReference type="NCBI Taxonomy" id="284812"/>
    <lineage>
        <taxon>Eukaryota</taxon>
        <taxon>Fungi</taxon>
        <taxon>Dikarya</taxon>
        <taxon>Ascomycota</taxon>
        <taxon>Taphrinomycotina</taxon>
        <taxon>Schizosaccharomycetes</taxon>
        <taxon>Schizosaccharomycetales</taxon>
        <taxon>Schizosaccharomycetaceae</taxon>
        <taxon>Schizosaccharomyces</taxon>
    </lineage>
</organism>
<accession>O14339</accession>